<sequence>MARVCKVTGKRPMSGNNVSHANNKTKRRFLPNLQSRRFWVESENRWVRLRVSNAALRTIDKVGIDVVLADLRARGEA</sequence>
<name>RL28_NEIM0</name>
<organism>
    <name type="scientific">Neisseria meningitidis serogroup C (strain 053442)</name>
    <dbReference type="NCBI Taxonomy" id="374833"/>
    <lineage>
        <taxon>Bacteria</taxon>
        <taxon>Pseudomonadati</taxon>
        <taxon>Pseudomonadota</taxon>
        <taxon>Betaproteobacteria</taxon>
        <taxon>Neisseriales</taxon>
        <taxon>Neisseriaceae</taxon>
        <taxon>Neisseria</taxon>
    </lineage>
</organism>
<comment type="similarity">
    <text evidence="1">Belongs to the bacterial ribosomal protein bL28 family.</text>
</comment>
<protein>
    <recommendedName>
        <fullName evidence="1">Large ribosomal subunit protein bL28</fullName>
    </recommendedName>
    <alternativeName>
        <fullName evidence="3">50S ribosomal protein L28</fullName>
    </alternativeName>
</protein>
<gene>
    <name evidence="1" type="primary">rpmB</name>
    <name type="ordered locus">NMCC_1823</name>
</gene>
<evidence type="ECO:0000255" key="1">
    <source>
        <dbReference type="HAMAP-Rule" id="MF_00373"/>
    </source>
</evidence>
<evidence type="ECO:0000256" key="2">
    <source>
        <dbReference type="SAM" id="MobiDB-lite"/>
    </source>
</evidence>
<evidence type="ECO:0000305" key="3"/>
<proteinExistence type="inferred from homology"/>
<feature type="chain" id="PRO_1000079856" description="Large ribosomal subunit protein bL28">
    <location>
        <begin position="1"/>
        <end position="77"/>
    </location>
</feature>
<feature type="region of interest" description="Disordered" evidence="2">
    <location>
        <begin position="1"/>
        <end position="26"/>
    </location>
</feature>
<keyword id="KW-0687">Ribonucleoprotein</keyword>
<keyword id="KW-0689">Ribosomal protein</keyword>
<reference key="1">
    <citation type="journal article" date="2008" name="Genomics">
        <title>Characterization of ST-4821 complex, a unique Neisseria meningitidis clone.</title>
        <authorList>
            <person name="Peng J."/>
            <person name="Yang L."/>
            <person name="Yang F."/>
            <person name="Yang J."/>
            <person name="Yan Y."/>
            <person name="Nie H."/>
            <person name="Zhang X."/>
            <person name="Xiong Z."/>
            <person name="Jiang Y."/>
            <person name="Cheng F."/>
            <person name="Xu X."/>
            <person name="Chen S."/>
            <person name="Sun L."/>
            <person name="Li W."/>
            <person name="Shen Y."/>
            <person name="Shao Z."/>
            <person name="Liang X."/>
            <person name="Xu J."/>
            <person name="Jin Q."/>
        </authorList>
    </citation>
    <scope>NUCLEOTIDE SEQUENCE [LARGE SCALE GENOMIC DNA]</scope>
    <source>
        <strain>053442</strain>
    </source>
</reference>
<accession>A9M300</accession>
<dbReference type="EMBL" id="CP000381">
    <property type="protein sequence ID" value="ABX73962.1"/>
    <property type="molecule type" value="Genomic_DNA"/>
</dbReference>
<dbReference type="RefSeq" id="WP_002216391.1">
    <property type="nucleotide sequence ID" value="NC_010120.1"/>
</dbReference>
<dbReference type="SMR" id="A9M300"/>
<dbReference type="GeneID" id="93387412"/>
<dbReference type="KEGG" id="nmn:NMCC_1823"/>
<dbReference type="HOGENOM" id="CLU_064548_3_1_4"/>
<dbReference type="Proteomes" id="UP000001177">
    <property type="component" value="Chromosome"/>
</dbReference>
<dbReference type="GO" id="GO:0022625">
    <property type="term" value="C:cytosolic large ribosomal subunit"/>
    <property type="evidence" value="ECO:0007669"/>
    <property type="project" value="TreeGrafter"/>
</dbReference>
<dbReference type="GO" id="GO:0003735">
    <property type="term" value="F:structural constituent of ribosome"/>
    <property type="evidence" value="ECO:0007669"/>
    <property type="project" value="InterPro"/>
</dbReference>
<dbReference type="GO" id="GO:0006412">
    <property type="term" value="P:translation"/>
    <property type="evidence" value="ECO:0007669"/>
    <property type="project" value="UniProtKB-UniRule"/>
</dbReference>
<dbReference type="FunFam" id="2.30.170.40:FF:000001">
    <property type="entry name" value="50S ribosomal protein L28"/>
    <property type="match status" value="1"/>
</dbReference>
<dbReference type="Gene3D" id="2.30.170.40">
    <property type="entry name" value="Ribosomal protein L28/L24"/>
    <property type="match status" value="1"/>
</dbReference>
<dbReference type="HAMAP" id="MF_00373">
    <property type="entry name" value="Ribosomal_bL28"/>
    <property type="match status" value="1"/>
</dbReference>
<dbReference type="InterPro" id="IPR026569">
    <property type="entry name" value="Ribosomal_bL28"/>
</dbReference>
<dbReference type="InterPro" id="IPR034704">
    <property type="entry name" value="Ribosomal_bL28/bL31-like_sf"/>
</dbReference>
<dbReference type="InterPro" id="IPR001383">
    <property type="entry name" value="Ribosomal_bL28_bact-type"/>
</dbReference>
<dbReference type="InterPro" id="IPR037147">
    <property type="entry name" value="Ribosomal_bL28_sf"/>
</dbReference>
<dbReference type="NCBIfam" id="TIGR00009">
    <property type="entry name" value="L28"/>
    <property type="match status" value="1"/>
</dbReference>
<dbReference type="PANTHER" id="PTHR13528">
    <property type="entry name" value="39S RIBOSOMAL PROTEIN L28, MITOCHONDRIAL"/>
    <property type="match status" value="1"/>
</dbReference>
<dbReference type="PANTHER" id="PTHR13528:SF2">
    <property type="entry name" value="LARGE RIBOSOMAL SUBUNIT PROTEIN BL28M"/>
    <property type="match status" value="1"/>
</dbReference>
<dbReference type="Pfam" id="PF00830">
    <property type="entry name" value="Ribosomal_L28"/>
    <property type="match status" value="1"/>
</dbReference>
<dbReference type="SUPFAM" id="SSF143800">
    <property type="entry name" value="L28p-like"/>
    <property type="match status" value="1"/>
</dbReference>